<proteinExistence type="predicted"/>
<sequence length="409" mass="46329">MDPIEFIQKSASSIASTMHKLKLKYNPFSEKPIRGNTKFFVGRVSELREIGEILGSALHGSVANAAIVGTKGIGKSSMLNIIYYATKKQGHWVVEMTASQVTPRQFLIQLLYNILTENIITMSGTIKSDYMEHSSRILDMYRKLNNYGDKVPIHYPRERIERDLEYLINEVKSPDKLCIILIDEADQFAKKSCLSLLQFFHSFLYEEGILTFMAGSPTLMDDLTKISPPIKDRIPKIINMPPLSKDESYDLIRRRLEDAHIDGAEEFEPFTEEAIHKIVEECDGIPRKIIMTCSESISIAIRKGLTKIDEKVVKEAMHSLGISVGHQILNHLTPAQSEIVRAMAELGGSATVTQLAEYLKKSPSTIGTHLSDIYEMGYIYKEREGNNVYYKLSKELRDVLIGEDDELEM</sequence>
<dbReference type="EMBL" id="L77117">
    <property type="protein sequence ID" value="AAB98778.1"/>
    <property type="molecule type" value="Genomic_DNA"/>
</dbReference>
<dbReference type="PIR" id="F64396">
    <property type="entry name" value="F64396"/>
</dbReference>
<dbReference type="RefSeq" id="WP_010870279.1">
    <property type="nucleotide sequence ID" value="NC_000909.1"/>
</dbReference>
<dbReference type="SMR" id="Q58184"/>
<dbReference type="STRING" id="243232.MJ_0774"/>
<dbReference type="PaxDb" id="243232-MJ_0774"/>
<dbReference type="EnsemblBacteria" id="AAB98778">
    <property type="protein sequence ID" value="AAB98778"/>
    <property type="gene ID" value="MJ_0774"/>
</dbReference>
<dbReference type="GeneID" id="1451651"/>
<dbReference type="KEGG" id="mja:MJ_0774"/>
<dbReference type="eggNOG" id="arCOG00472">
    <property type="taxonomic scope" value="Archaea"/>
</dbReference>
<dbReference type="HOGENOM" id="CLU_670165_0_0_2"/>
<dbReference type="InParanoid" id="Q58184"/>
<dbReference type="OrthoDB" id="14763at2157"/>
<dbReference type="PhylomeDB" id="Q58184"/>
<dbReference type="Proteomes" id="UP000000805">
    <property type="component" value="Chromosome"/>
</dbReference>
<dbReference type="GO" id="GO:0016887">
    <property type="term" value="F:ATP hydrolysis activity"/>
    <property type="evidence" value="ECO:0007669"/>
    <property type="project" value="InterPro"/>
</dbReference>
<dbReference type="GO" id="GO:0003677">
    <property type="term" value="F:DNA binding"/>
    <property type="evidence" value="ECO:0007669"/>
    <property type="project" value="UniProtKB-KW"/>
</dbReference>
<dbReference type="GO" id="GO:0003700">
    <property type="term" value="F:DNA-binding transcription factor activity"/>
    <property type="evidence" value="ECO:0007669"/>
    <property type="project" value="InterPro"/>
</dbReference>
<dbReference type="CDD" id="cd00009">
    <property type="entry name" value="AAA"/>
    <property type="match status" value="1"/>
</dbReference>
<dbReference type="CDD" id="cd00090">
    <property type="entry name" value="HTH_ARSR"/>
    <property type="match status" value="1"/>
</dbReference>
<dbReference type="Gene3D" id="1.10.8.60">
    <property type="match status" value="1"/>
</dbReference>
<dbReference type="Gene3D" id="3.40.50.300">
    <property type="entry name" value="P-loop containing nucleotide triphosphate hydrolases"/>
    <property type="match status" value="1"/>
</dbReference>
<dbReference type="Gene3D" id="1.10.10.10">
    <property type="entry name" value="Winged helix-like DNA-binding domain superfamily/Winged helix DNA-binding domain"/>
    <property type="match status" value="1"/>
</dbReference>
<dbReference type="InterPro" id="IPR003593">
    <property type="entry name" value="AAA+_ATPase"/>
</dbReference>
<dbReference type="InterPro" id="IPR041664">
    <property type="entry name" value="AAA_16"/>
</dbReference>
<dbReference type="InterPro" id="IPR011991">
    <property type="entry name" value="ArsR-like_HTH"/>
</dbReference>
<dbReference type="InterPro" id="IPR052026">
    <property type="entry name" value="ExeA_AAA_ATPase_DNA-bind"/>
</dbReference>
<dbReference type="InterPro" id="IPR001845">
    <property type="entry name" value="HTH_ArsR_DNA-bd_dom"/>
</dbReference>
<dbReference type="InterPro" id="IPR027417">
    <property type="entry name" value="P-loop_NTPase"/>
</dbReference>
<dbReference type="InterPro" id="IPR036388">
    <property type="entry name" value="WH-like_DNA-bd_sf"/>
</dbReference>
<dbReference type="InterPro" id="IPR036390">
    <property type="entry name" value="WH_DNA-bd_sf"/>
</dbReference>
<dbReference type="PANTHER" id="PTHR35894">
    <property type="entry name" value="GENERAL SECRETION PATHWAY PROTEIN A-RELATED"/>
    <property type="match status" value="1"/>
</dbReference>
<dbReference type="PANTHER" id="PTHR35894:SF1">
    <property type="entry name" value="PHOSPHORIBULOKINASE _ URIDINE KINASE FAMILY"/>
    <property type="match status" value="1"/>
</dbReference>
<dbReference type="Pfam" id="PF13191">
    <property type="entry name" value="AAA_16"/>
    <property type="match status" value="1"/>
</dbReference>
<dbReference type="Pfam" id="PF01022">
    <property type="entry name" value="HTH_5"/>
    <property type="match status" value="1"/>
</dbReference>
<dbReference type="SMART" id="SM00382">
    <property type="entry name" value="AAA"/>
    <property type="match status" value="1"/>
</dbReference>
<dbReference type="SMART" id="SM00418">
    <property type="entry name" value="HTH_ARSR"/>
    <property type="match status" value="1"/>
</dbReference>
<dbReference type="SUPFAM" id="SSF52540">
    <property type="entry name" value="P-loop containing nucleoside triphosphate hydrolases"/>
    <property type="match status" value="1"/>
</dbReference>
<dbReference type="SUPFAM" id="SSF46785">
    <property type="entry name" value="Winged helix' DNA-binding domain"/>
    <property type="match status" value="1"/>
</dbReference>
<dbReference type="PROSITE" id="PS50987">
    <property type="entry name" value="HTH_ARSR_2"/>
    <property type="match status" value="1"/>
</dbReference>
<reference key="1">
    <citation type="journal article" date="1996" name="Science">
        <title>Complete genome sequence of the methanogenic archaeon, Methanococcus jannaschii.</title>
        <authorList>
            <person name="Bult C.J."/>
            <person name="White O."/>
            <person name="Olsen G.J."/>
            <person name="Zhou L."/>
            <person name="Fleischmann R.D."/>
            <person name="Sutton G.G."/>
            <person name="Blake J.A."/>
            <person name="FitzGerald L.M."/>
            <person name="Clayton R.A."/>
            <person name="Gocayne J.D."/>
            <person name="Kerlavage A.R."/>
            <person name="Dougherty B.A."/>
            <person name="Tomb J.-F."/>
            <person name="Adams M.D."/>
            <person name="Reich C.I."/>
            <person name="Overbeek R."/>
            <person name="Kirkness E.F."/>
            <person name="Weinstock K.G."/>
            <person name="Merrick J.M."/>
            <person name="Glodek A."/>
            <person name="Scott J.L."/>
            <person name="Geoghagen N.S.M."/>
            <person name="Weidman J.F."/>
            <person name="Fuhrmann J.L."/>
            <person name="Nguyen D."/>
            <person name="Utterback T.R."/>
            <person name="Kelley J.M."/>
            <person name="Peterson J.D."/>
            <person name="Sadow P.W."/>
            <person name="Hanna M.C."/>
            <person name="Cotton M.D."/>
            <person name="Roberts K.M."/>
            <person name="Hurst M.A."/>
            <person name="Kaine B.P."/>
            <person name="Borodovsky M."/>
            <person name="Klenk H.-P."/>
            <person name="Fraser C.M."/>
            <person name="Smith H.O."/>
            <person name="Woese C.R."/>
            <person name="Venter J.C."/>
        </authorList>
    </citation>
    <scope>NUCLEOTIDE SEQUENCE [LARGE SCALE GENOMIC DNA]</scope>
    <source>
        <strain>ATCC 43067 / DSM 2661 / JAL-1 / JCM 10045 / NBRC 100440</strain>
    </source>
</reference>
<organism>
    <name type="scientific">Methanocaldococcus jannaschii (strain ATCC 43067 / DSM 2661 / JAL-1 / JCM 10045 / NBRC 100440)</name>
    <name type="common">Methanococcus jannaschii</name>
    <dbReference type="NCBI Taxonomy" id="243232"/>
    <lineage>
        <taxon>Archaea</taxon>
        <taxon>Methanobacteriati</taxon>
        <taxon>Methanobacteriota</taxon>
        <taxon>Methanomada group</taxon>
        <taxon>Methanococci</taxon>
        <taxon>Methanococcales</taxon>
        <taxon>Methanocaldococcaceae</taxon>
        <taxon>Methanocaldococcus</taxon>
    </lineage>
</organism>
<accession>Q58184</accession>
<gene>
    <name type="ordered locus">MJ0774</name>
</gene>
<evidence type="ECO:0000255" key="1">
    <source>
        <dbReference type="PROSITE-ProRule" id="PRU00340"/>
    </source>
</evidence>
<feature type="chain" id="PRO_0000160633" description="Uncharacterized HTH-type transcriptional regulator MJ0774">
    <location>
        <begin position="1"/>
        <end position="409"/>
    </location>
</feature>
<feature type="domain" description="HTH arsR-type" evidence="1">
    <location>
        <begin position="305"/>
        <end position="409"/>
    </location>
</feature>
<name>Y774_METJA</name>
<keyword id="KW-0238">DNA-binding</keyword>
<keyword id="KW-1185">Reference proteome</keyword>
<keyword id="KW-0804">Transcription</keyword>
<keyword id="KW-0805">Transcription regulation</keyword>
<protein>
    <recommendedName>
        <fullName>Uncharacterized HTH-type transcriptional regulator MJ0774</fullName>
    </recommendedName>
</protein>